<keyword id="KW-0067">ATP-binding</keyword>
<keyword id="KW-0414">Isoprene biosynthesis</keyword>
<keyword id="KW-0418">Kinase</keyword>
<keyword id="KW-0547">Nucleotide-binding</keyword>
<keyword id="KW-0808">Transferase</keyword>
<accession>A8F913</accession>
<evidence type="ECO:0000255" key="1">
    <source>
        <dbReference type="HAMAP-Rule" id="MF_00061"/>
    </source>
</evidence>
<dbReference type="EC" id="2.7.1.148" evidence="1"/>
<dbReference type="EMBL" id="CP000813">
    <property type="protein sequence ID" value="ABV60730.1"/>
    <property type="molecule type" value="Genomic_DNA"/>
</dbReference>
<dbReference type="RefSeq" id="WP_012008654.1">
    <property type="nucleotide sequence ID" value="NZ_VEIS01000022.1"/>
</dbReference>
<dbReference type="SMR" id="A8F913"/>
<dbReference type="STRING" id="315750.BPUM_0030"/>
<dbReference type="GeneID" id="5619267"/>
<dbReference type="KEGG" id="bpu:BPUM_0030"/>
<dbReference type="eggNOG" id="COG1947">
    <property type="taxonomic scope" value="Bacteria"/>
</dbReference>
<dbReference type="HOGENOM" id="CLU_053057_1_1_9"/>
<dbReference type="OrthoDB" id="9809438at2"/>
<dbReference type="UniPathway" id="UPA00056">
    <property type="reaction ID" value="UER00094"/>
</dbReference>
<dbReference type="Proteomes" id="UP000001355">
    <property type="component" value="Chromosome"/>
</dbReference>
<dbReference type="GO" id="GO:0050515">
    <property type="term" value="F:4-(cytidine 5'-diphospho)-2-C-methyl-D-erythritol kinase activity"/>
    <property type="evidence" value="ECO:0007669"/>
    <property type="project" value="UniProtKB-UniRule"/>
</dbReference>
<dbReference type="GO" id="GO:0005524">
    <property type="term" value="F:ATP binding"/>
    <property type="evidence" value="ECO:0007669"/>
    <property type="project" value="UniProtKB-UniRule"/>
</dbReference>
<dbReference type="GO" id="GO:0019288">
    <property type="term" value="P:isopentenyl diphosphate biosynthetic process, methylerythritol 4-phosphate pathway"/>
    <property type="evidence" value="ECO:0007669"/>
    <property type="project" value="UniProtKB-UniRule"/>
</dbReference>
<dbReference type="GO" id="GO:0016114">
    <property type="term" value="P:terpenoid biosynthetic process"/>
    <property type="evidence" value="ECO:0007669"/>
    <property type="project" value="InterPro"/>
</dbReference>
<dbReference type="FunFam" id="3.30.230.10:FF:000029">
    <property type="entry name" value="4-diphosphocytidyl-2-C-methyl-D-erythritol kinase"/>
    <property type="match status" value="1"/>
</dbReference>
<dbReference type="FunFam" id="3.30.70.890:FF:000006">
    <property type="entry name" value="4-diphosphocytidyl-2-C-methyl-D-erythritol kinase"/>
    <property type="match status" value="1"/>
</dbReference>
<dbReference type="Gene3D" id="3.30.230.10">
    <property type="match status" value="1"/>
</dbReference>
<dbReference type="Gene3D" id="3.30.70.890">
    <property type="entry name" value="GHMP kinase, C-terminal domain"/>
    <property type="match status" value="1"/>
</dbReference>
<dbReference type="HAMAP" id="MF_00061">
    <property type="entry name" value="IspE"/>
    <property type="match status" value="1"/>
</dbReference>
<dbReference type="InterPro" id="IPR013750">
    <property type="entry name" value="GHMP_kinase_C_dom"/>
</dbReference>
<dbReference type="InterPro" id="IPR036554">
    <property type="entry name" value="GHMP_kinase_C_sf"/>
</dbReference>
<dbReference type="InterPro" id="IPR006204">
    <property type="entry name" value="GHMP_kinase_N_dom"/>
</dbReference>
<dbReference type="InterPro" id="IPR004424">
    <property type="entry name" value="IspE"/>
</dbReference>
<dbReference type="InterPro" id="IPR020568">
    <property type="entry name" value="Ribosomal_Su5_D2-typ_SF"/>
</dbReference>
<dbReference type="InterPro" id="IPR014721">
    <property type="entry name" value="Ribsml_uS5_D2-typ_fold_subgr"/>
</dbReference>
<dbReference type="NCBIfam" id="TIGR00154">
    <property type="entry name" value="ispE"/>
    <property type="match status" value="1"/>
</dbReference>
<dbReference type="NCBIfam" id="NF011202">
    <property type="entry name" value="PRK14608.1"/>
    <property type="match status" value="1"/>
</dbReference>
<dbReference type="PANTHER" id="PTHR43527">
    <property type="entry name" value="4-DIPHOSPHOCYTIDYL-2-C-METHYL-D-ERYTHRITOL KINASE, CHLOROPLASTIC"/>
    <property type="match status" value="1"/>
</dbReference>
<dbReference type="PANTHER" id="PTHR43527:SF2">
    <property type="entry name" value="4-DIPHOSPHOCYTIDYL-2-C-METHYL-D-ERYTHRITOL KINASE, CHLOROPLASTIC"/>
    <property type="match status" value="1"/>
</dbReference>
<dbReference type="Pfam" id="PF08544">
    <property type="entry name" value="GHMP_kinases_C"/>
    <property type="match status" value="1"/>
</dbReference>
<dbReference type="Pfam" id="PF00288">
    <property type="entry name" value="GHMP_kinases_N"/>
    <property type="match status" value="1"/>
</dbReference>
<dbReference type="PIRSF" id="PIRSF010376">
    <property type="entry name" value="IspE"/>
    <property type="match status" value="1"/>
</dbReference>
<dbReference type="SUPFAM" id="SSF55060">
    <property type="entry name" value="GHMP Kinase, C-terminal domain"/>
    <property type="match status" value="1"/>
</dbReference>
<dbReference type="SUPFAM" id="SSF54211">
    <property type="entry name" value="Ribosomal protein S5 domain 2-like"/>
    <property type="match status" value="1"/>
</dbReference>
<sequence length="289" mass="31814">MRILEKAPAKINLSLDVHGKRPDGYHEVEMVMTTIDLADRLELTELDKDEIRVSSHNRFVPDDQRNLAYQAAKLLKTRFGIQKGVSIVITKTIPVAAGLAGGSSDAAAALRGLNRLWKLNLTLDELAELGAEIGSDVSFCVHGGTALATGRGEKLKHIATPPHCWVILAKPVIGVSTAEVYRQYDASKVEHPNVERMIEAIEAKDYKEMCGSLGNVLESVTLKMYPEVDMIKRQMKRFGADAVLMSGSGPTVFGLIQYESKVQRIYNGLRGFCDQVYAVRMIGEQNALD</sequence>
<name>ISPE_BACP2</name>
<proteinExistence type="inferred from homology"/>
<protein>
    <recommendedName>
        <fullName evidence="1">4-diphosphocytidyl-2-C-methyl-D-erythritol kinase</fullName>
        <shortName evidence="1">CMK</shortName>
        <ecNumber evidence="1">2.7.1.148</ecNumber>
    </recommendedName>
    <alternativeName>
        <fullName evidence="1">4-(cytidine-5'-diphospho)-2-C-methyl-D-erythritol kinase</fullName>
    </alternativeName>
</protein>
<organism>
    <name type="scientific">Bacillus pumilus (strain SAFR-032)</name>
    <dbReference type="NCBI Taxonomy" id="315750"/>
    <lineage>
        <taxon>Bacteria</taxon>
        <taxon>Bacillati</taxon>
        <taxon>Bacillota</taxon>
        <taxon>Bacilli</taxon>
        <taxon>Bacillales</taxon>
        <taxon>Bacillaceae</taxon>
        <taxon>Bacillus</taxon>
    </lineage>
</organism>
<feature type="chain" id="PRO_1000057416" description="4-diphosphocytidyl-2-C-methyl-D-erythritol kinase">
    <location>
        <begin position="1"/>
        <end position="289"/>
    </location>
</feature>
<feature type="active site" evidence="1">
    <location>
        <position position="10"/>
    </location>
</feature>
<feature type="active site" evidence="1">
    <location>
        <position position="136"/>
    </location>
</feature>
<feature type="binding site" evidence="1">
    <location>
        <begin position="94"/>
        <end position="104"/>
    </location>
    <ligand>
        <name>ATP</name>
        <dbReference type="ChEBI" id="CHEBI:30616"/>
    </ligand>
</feature>
<reference key="1">
    <citation type="journal article" date="2007" name="PLoS ONE">
        <title>Paradoxical DNA repair and peroxide resistance gene conservation in Bacillus pumilus SAFR-032.</title>
        <authorList>
            <person name="Gioia J."/>
            <person name="Yerrapragada S."/>
            <person name="Qin X."/>
            <person name="Jiang H."/>
            <person name="Igboeli O.C."/>
            <person name="Muzny D."/>
            <person name="Dugan-Rocha S."/>
            <person name="Ding Y."/>
            <person name="Hawes A."/>
            <person name="Liu W."/>
            <person name="Perez L."/>
            <person name="Kovar C."/>
            <person name="Dinh H."/>
            <person name="Lee S."/>
            <person name="Nazareth L."/>
            <person name="Blyth P."/>
            <person name="Holder M."/>
            <person name="Buhay C."/>
            <person name="Tirumalai M.R."/>
            <person name="Liu Y."/>
            <person name="Dasgupta I."/>
            <person name="Bokhetache L."/>
            <person name="Fujita M."/>
            <person name="Karouia F."/>
            <person name="Eswara Moorthy P."/>
            <person name="Siefert J."/>
            <person name="Uzman A."/>
            <person name="Buzumbo P."/>
            <person name="Verma A."/>
            <person name="Zwiya H."/>
            <person name="McWilliams B.D."/>
            <person name="Olowu A."/>
            <person name="Clinkenbeard K.D."/>
            <person name="Newcombe D."/>
            <person name="Golebiewski L."/>
            <person name="Petrosino J.F."/>
            <person name="Nicholson W.L."/>
            <person name="Fox G.E."/>
            <person name="Venkateswaran K."/>
            <person name="Highlander S.K."/>
            <person name="Weinstock G.M."/>
        </authorList>
    </citation>
    <scope>NUCLEOTIDE SEQUENCE [LARGE SCALE GENOMIC DNA]</scope>
    <source>
        <strain>SAFR-032</strain>
    </source>
</reference>
<gene>
    <name evidence="1" type="primary">ispE</name>
    <name type="ordered locus">BPUM_0030</name>
</gene>
<comment type="function">
    <text evidence="1">Catalyzes the phosphorylation of the position 2 hydroxy group of 4-diphosphocytidyl-2C-methyl-D-erythritol.</text>
</comment>
<comment type="catalytic activity">
    <reaction evidence="1">
        <text>4-CDP-2-C-methyl-D-erythritol + ATP = 4-CDP-2-C-methyl-D-erythritol 2-phosphate + ADP + H(+)</text>
        <dbReference type="Rhea" id="RHEA:18437"/>
        <dbReference type="ChEBI" id="CHEBI:15378"/>
        <dbReference type="ChEBI" id="CHEBI:30616"/>
        <dbReference type="ChEBI" id="CHEBI:57823"/>
        <dbReference type="ChEBI" id="CHEBI:57919"/>
        <dbReference type="ChEBI" id="CHEBI:456216"/>
        <dbReference type="EC" id="2.7.1.148"/>
    </reaction>
</comment>
<comment type="pathway">
    <text evidence="1">Isoprenoid biosynthesis; isopentenyl diphosphate biosynthesis via DXP pathway; isopentenyl diphosphate from 1-deoxy-D-xylulose 5-phosphate: step 3/6.</text>
</comment>
<comment type="similarity">
    <text evidence="1">Belongs to the GHMP kinase family. IspE subfamily.</text>
</comment>